<feature type="chain" id="PRO_0000083745" description="3-isopropylmalate dehydrogenase">
    <location>
        <begin position="1"/>
        <end position="363"/>
    </location>
</feature>
<feature type="binding site" evidence="1">
    <location>
        <begin position="78"/>
        <end position="91"/>
    </location>
    <ligand>
        <name>NAD(+)</name>
        <dbReference type="ChEBI" id="CHEBI:57540"/>
    </ligand>
</feature>
<feature type="binding site" evidence="1">
    <location>
        <position position="99"/>
    </location>
    <ligand>
        <name>substrate</name>
    </ligand>
</feature>
<feature type="binding site" evidence="1">
    <location>
        <position position="109"/>
    </location>
    <ligand>
        <name>substrate</name>
    </ligand>
</feature>
<feature type="binding site" evidence="1">
    <location>
        <position position="138"/>
    </location>
    <ligand>
        <name>substrate</name>
    </ligand>
</feature>
<feature type="binding site" evidence="1">
    <location>
        <position position="227"/>
    </location>
    <ligand>
        <name>Mg(2+)</name>
        <dbReference type="ChEBI" id="CHEBI:18420"/>
    </ligand>
</feature>
<feature type="binding site" evidence="1">
    <location>
        <position position="227"/>
    </location>
    <ligand>
        <name>substrate</name>
    </ligand>
</feature>
<feature type="binding site" evidence="1">
    <location>
        <position position="251"/>
    </location>
    <ligand>
        <name>Mg(2+)</name>
        <dbReference type="ChEBI" id="CHEBI:18420"/>
    </ligand>
</feature>
<feature type="binding site" evidence="1">
    <location>
        <position position="255"/>
    </location>
    <ligand>
        <name>Mg(2+)</name>
        <dbReference type="ChEBI" id="CHEBI:18420"/>
    </ligand>
</feature>
<feature type="binding site" evidence="1">
    <location>
        <begin position="285"/>
        <end position="297"/>
    </location>
    <ligand>
        <name>NAD(+)</name>
        <dbReference type="ChEBI" id="CHEBI:57540"/>
    </ligand>
</feature>
<feature type="site" description="Important for catalysis" evidence="1">
    <location>
        <position position="145"/>
    </location>
</feature>
<feature type="site" description="Important for catalysis" evidence="1">
    <location>
        <position position="195"/>
    </location>
</feature>
<accession>Q326G2</accession>
<proteinExistence type="inferred from homology"/>
<protein>
    <recommendedName>
        <fullName evidence="1">3-isopropylmalate dehydrogenase</fullName>
        <ecNumber evidence="1">1.1.1.85</ecNumber>
    </recommendedName>
    <alternativeName>
        <fullName evidence="1">3-IPM-DH</fullName>
    </alternativeName>
    <alternativeName>
        <fullName evidence="1">Beta-IPM dehydrogenase</fullName>
        <shortName evidence="1">IMDH</shortName>
    </alternativeName>
</protein>
<reference key="1">
    <citation type="journal article" date="2005" name="Nucleic Acids Res.">
        <title>Genome dynamics and diversity of Shigella species, the etiologic agents of bacillary dysentery.</title>
        <authorList>
            <person name="Yang F."/>
            <person name="Yang J."/>
            <person name="Zhang X."/>
            <person name="Chen L."/>
            <person name="Jiang Y."/>
            <person name="Yan Y."/>
            <person name="Tang X."/>
            <person name="Wang J."/>
            <person name="Xiong Z."/>
            <person name="Dong J."/>
            <person name="Xue Y."/>
            <person name="Zhu Y."/>
            <person name="Xu X."/>
            <person name="Sun L."/>
            <person name="Chen S."/>
            <person name="Nie H."/>
            <person name="Peng J."/>
            <person name="Xu J."/>
            <person name="Wang Y."/>
            <person name="Yuan Z."/>
            <person name="Wen Y."/>
            <person name="Yao Z."/>
            <person name="Shen Y."/>
            <person name="Qiang B."/>
            <person name="Hou Y."/>
            <person name="Yu J."/>
            <person name="Jin Q."/>
        </authorList>
    </citation>
    <scope>NUCLEOTIDE SEQUENCE [LARGE SCALE GENOMIC DNA]</scope>
    <source>
        <strain>Sb227</strain>
    </source>
</reference>
<sequence>MSKNYHIAVLPGDGIGPEVMTQALKVLDAVRNRFAMRITTSHYDVGGAAIDNHGQPLPPATVEGCEQADAVLFGSVGGPKWEHLPPDQQPERGALLPLRKHFKLFSNLRPAKLYQGLEAFCPLRADIAANGFDILCVRELTGGIYFGQPKGREGSGQYEKAFDTEVYHRFEIERIARIAFESARKRRHKVTSIDKANVLQSSILWREIVNEIATEYPDVELAHMYIDNATMQLIKDPSQFDVLLCSNLFGDILSDECAMITGSMGMLPSASLNEQGFGLYEPAGGSAPDITGKNIANPIAQILSLALLLRYSLDADDAACAIERAINRALEEGIRTGDLARGAAAVSTDEMGDIIARYVAEGV</sequence>
<keyword id="KW-0028">Amino-acid biosynthesis</keyword>
<keyword id="KW-0100">Branched-chain amino acid biosynthesis</keyword>
<keyword id="KW-0963">Cytoplasm</keyword>
<keyword id="KW-0432">Leucine biosynthesis</keyword>
<keyword id="KW-0460">Magnesium</keyword>
<keyword id="KW-0464">Manganese</keyword>
<keyword id="KW-0479">Metal-binding</keyword>
<keyword id="KW-0520">NAD</keyword>
<keyword id="KW-0560">Oxidoreductase</keyword>
<gene>
    <name evidence="1" type="primary">leuB</name>
    <name type="ordered locus">SBO_0060</name>
</gene>
<evidence type="ECO:0000255" key="1">
    <source>
        <dbReference type="HAMAP-Rule" id="MF_01033"/>
    </source>
</evidence>
<evidence type="ECO:0000305" key="2"/>
<name>LEU3_SHIBS</name>
<comment type="function">
    <text evidence="1">Catalyzes the oxidation of 3-carboxy-2-hydroxy-4-methylpentanoate (3-isopropylmalate) to 3-carboxy-4-methyl-2-oxopentanoate. The product decarboxylates to 4-methyl-2 oxopentanoate.</text>
</comment>
<comment type="catalytic activity">
    <reaction evidence="1">
        <text>(2R,3S)-3-isopropylmalate + NAD(+) = 4-methyl-2-oxopentanoate + CO2 + NADH</text>
        <dbReference type="Rhea" id="RHEA:32271"/>
        <dbReference type="ChEBI" id="CHEBI:16526"/>
        <dbReference type="ChEBI" id="CHEBI:17865"/>
        <dbReference type="ChEBI" id="CHEBI:35121"/>
        <dbReference type="ChEBI" id="CHEBI:57540"/>
        <dbReference type="ChEBI" id="CHEBI:57945"/>
        <dbReference type="EC" id="1.1.1.85"/>
    </reaction>
</comment>
<comment type="cofactor">
    <cofactor evidence="1">
        <name>Mg(2+)</name>
        <dbReference type="ChEBI" id="CHEBI:18420"/>
    </cofactor>
    <cofactor evidence="1">
        <name>Mn(2+)</name>
        <dbReference type="ChEBI" id="CHEBI:29035"/>
    </cofactor>
    <text evidence="1">Binds 1 Mg(2+) or Mn(2+) ion per subunit.</text>
</comment>
<comment type="pathway">
    <text evidence="1">Amino-acid biosynthesis; L-leucine biosynthesis; L-leucine from 3-methyl-2-oxobutanoate: step 3/4.</text>
</comment>
<comment type="subunit">
    <text evidence="1">Homodimer.</text>
</comment>
<comment type="subcellular location">
    <subcellularLocation>
        <location evidence="1">Cytoplasm</location>
    </subcellularLocation>
</comment>
<comment type="similarity">
    <text evidence="1">Belongs to the isocitrate and isopropylmalate dehydrogenases family. LeuB type 1 subfamily.</text>
</comment>
<comment type="sequence caution" evidence="2">
    <conflict type="erroneous initiation">
        <sequence resource="EMBL-CDS" id="ABB64796"/>
    </conflict>
</comment>
<organism>
    <name type="scientific">Shigella boydii serotype 4 (strain Sb227)</name>
    <dbReference type="NCBI Taxonomy" id="300268"/>
    <lineage>
        <taxon>Bacteria</taxon>
        <taxon>Pseudomonadati</taxon>
        <taxon>Pseudomonadota</taxon>
        <taxon>Gammaproteobacteria</taxon>
        <taxon>Enterobacterales</taxon>
        <taxon>Enterobacteriaceae</taxon>
        <taxon>Shigella</taxon>
    </lineage>
</organism>
<dbReference type="EC" id="1.1.1.85" evidence="1"/>
<dbReference type="EMBL" id="CP000036">
    <property type="protein sequence ID" value="ABB64796.1"/>
    <property type="status" value="ALT_INIT"/>
    <property type="molecule type" value="Genomic_DNA"/>
</dbReference>
<dbReference type="RefSeq" id="WP_000042363.1">
    <property type="nucleotide sequence ID" value="NC_007613.1"/>
</dbReference>
<dbReference type="SMR" id="Q326G2"/>
<dbReference type="KEGG" id="sbo:SBO_0060"/>
<dbReference type="HOGENOM" id="CLU_031953_0_3_6"/>
<dbReference type="UniPathway" id="UPA00048">
    <property type="reaction ID" value="UER00072"/>
</dbReference>
<dbReference type="Proteomes" id="UP000007067">
    <property type="component" value="Chromosome"/>
</dbReference>
<dbReference type="GO" id="GO:0005829">
    <property type="term" value="C:cytosol"/>
    <property type="evidence" value="ECO:0007669"/>
    <property type="project" value="TreeGrafter"/>
</dbReference>
<dbReference type="GO" id="GO:0003862">
    <property type="term" value="F:3-isopropylmalate dehydrogenase activity"/>
    <property type="evidence" value="ECO:0007669"/>
    <property type="project" value="UniProtKB-UniRule"/>
</dbReference>
<dbReference type="GO" id="GO:0000287">
    <property type="term" value="F:magnesium ion binding"/>
    <property type="evidence" value="ECO:0007669"/>
    <property type="project" value="InterPro"/>
</dbReference>
<dbReference type="GO" id="GO:0051287">
    <property type="term" value="F:NAD binding"/>
    <property type="evidence" value="ECO:0007669"/>
    <property type="project" value="InterPro"/>
</dbReference>
<dbReference type="GO" id="GO:0009098">
    <property type="term" value="P:L-leucine biosynthetic process"/>
    <property type="evidence" value="ECO:0007669"/>
    <property type="project" value="UniProtKB-UniRule"/>
</dbReference>
<dbReference type="FunFam" id="3.40.718.10:FF:000004">
    <property type="entry name" value="3-isopropylmalate dehydrogenase"/>
    <property type="match status" value="1"/>
</dbReference>
<dbReference type="Gene3D" id="3.40.718.10">
    <property type="entry name" value="Isopropylmalate Dehydrogenase"/>
    <property type="match status" value="1"/>
</dbReference>
<dbReference type="HAMAP" id="MF_01033">
    <property type="entry name" value="LeuB_type1"/>
    <property type="match status" value="1"/>
</dbReference>
<dbReference type="InterPro" id="IPR019818">
    <property type="entry name" value="IsoCit/isopropylmalate_DH_CS"/>
</dbReference>
<dbReference type="InterPro" id="IPR024084">
    <property type="entry name" value="IsoPropMal-DH-like_dom"/>
</dbReference>
<dbReference type="InterPro" id="IPR004429">
    <property type="entry name" value="Isopropylmalate_DH"/>
</dbReference>
<dbReference type="NCBIfam" id="TIGR00169">
    <property type="entry name" value="leuB"/>
    <property type="match status" value="1"/>
</dbReference>
<dbReference type="PANTHER" id="PTHR42979">
    <property type="entry name" value="3-ISOPROPYLMALATE DEHYDROGENASE"/>
    <property type="match status" value="1"/>
</dbReference>
<dbReference type="PANTHER" id="PTHR42979:SF1">
    <property type="entry name" value="3-ISOPROPYLMALATE DEHYDROGENASE"/>
    <property type="match status" value="1"/>
</dbReference>
<dbReference type="Pfam" id="PF00180">
    <property type="entry name" value="Iso_dh"/>
    <property type="match status" value="1"/>
</dbReference>
<dbReference type="SMART" id="SM01329">
    <property type="entry name" value="Iso_dh"/>
    <property type="match status" value="1"/>
</dbReference>
<dbReference type="SUPFAM" id="SSF53659">
    <property type="entry name" value="Isocitrate/Isopropylmalate dehydrogenase-like"/>
    <property type="match status" value="1"/>
</dbReference>
<dbReference type="PROSITE" id="PS00470">
    <property type="entry name" value="IDH_IMDH"/>
    <property type="match status" value="1"/>
</dbReference>